<name>CISY_BARHE</name>
<evidence type="ECO:0000255" key="1">
    <source>
        <dbReference type="PROSITE-ProRule" id="PRU10117"/>
    </source>
</evidence>
<evidence type="ECO:0000305" key="2"/>
<gene>
    <name type="primary">gltA</name>
    <name type="ordered locus">BH06380</name>
</gene>
<feature type="chain" id="PRO_0000169934" description="Citrate synthase">
    <location>
        <begin position="1"/>
        <end position="431"/>
    </location>
</feature>
<feature type="active site" evidence="1">
    <location>
        <position position="306"/>
    </location>
</feature>
<feature type="active site" evidence="1">
    <location>
        <position position="364"/>
    </location>
</feature>
<proteinExistence type="inferred from homology"/>
<sequence>MSKNKAHITVNDKKIELSVRKGTLGPDVIEIASLYKETDTFTYDPGFTSTASCESKITYIDGNEGILLYRGYPIDQLAEKGDFLESCYLLLYGELPTKQEKIDFDRCIMQHTMVHEQFARFFHGFRRDSHPMAVMIACLGAMSAFYHDSIDITDPQQRMIASIRLISKVPTLAAMAYKYSIGQAFVYPRNDLSYAANFLRMCFSVPCEEYKINPVLTRAMDRIFTLHADHEQNASTSTVRLAGSSGANPFACIAAGVACLWGPAHGGANEACLKMLQEIGSVERIPEFIARAKDKNDSFRLMGFGHRVYKNYDPRAKIMQQTCHEVLKELNIQNDPLLDIAITLENIALNDEYFIEKKLYPNVDFYSGITLKALGFPTEMFTVLFALARSVGWVAQWKEMIEDPAQKISRPRQLYTGYAAREYIPIDKRVN</sequence>
<keyword id="KW-0808">Transferase</keyword>
<keyword id="KW-0816">Tricarboxylic acid cycle</keyword>
<dbReference type="EC" id="2.3.3.16"/>
<dbReference type="EMBL" id="L38987">
    <property type="protein sequence ID" value="AAA87325.1"/>
    <property type="molecule type" value="Genomic_DNA"/>
</dbReference>
<dbReference type="EMBL" id="BX897699">
    <property type="protein sequence ID" value="CAF27442.1"/>
    <property type="molecule type" value="Genomic_DNA"/>
</dbReference>
<dbReference type="PIR" id="I40044">
    <property type="entry name" value="I40044"/>
</dbReference>
<dbReference type="RefSeq" id="WP_011180562.1">
    <property type="nucleotide sequence ID" value="NZ_LRIJ02000001.1"/>
</dbReference>
<dbReference type="SMR" id="P51033"/>
<dbReference type="PaxDb" id="283166-BH06380"/>
<dbReference type="EnsemblBacteria" id="CAF27442">
    <property type="protein sequence ID" value="CAF27442"/>
    <property type="gene ID" value="BH06380"/>
</dbReference>
<dbReference type="KEGG" id="bhe:BH06380"/>
<dbReference type="eggNOG" id="COG0372">
    <property type="taxonomic scope" value="Bacteria"/>
</dbReference>
<dbReference type="OrthoDB" id="9800864at2"/>
<dbReference type="UniPathway" id="UPA00223">
    <property type="reaction ID" value="UER00717"/>
</dbReference>
<dbReference type="Proteomes" id="UP000000421">
    <property type="component" value="Chromosome"/>
</dbReference>
<dbReference type="GO" id="GO:0005737">
    <property type="term" value="C:cytoplasm"/>
    <property type="evidence" value="ECO:0007669"/>
    <property type="project" value="InterPro"/>
</dbReference>
<dbReference type="GO" id="GO:0004108">
    <property type="term" value="F:citrate (Si)-synthase activity"/>
    <property type="evidence" value="ECO:0007669"/>
    <property type="project" value="InterPro"/>
</dbReference>
<dbReference type="GO" id="GO:0006099">
    <property type="term" value="P:tricarboxylic acid cycle"/>
    <property type="evidence" value="ECO:0007669"/>
    <property type="project" value="UniProtKB-UniPathway"/>
</dbReference>
<dbReference type="CDD" id="cd06114">
    <property type="entry name" value="EcCS_like"/>
    <property type="match status" value="1"/>
</dbReference>
<dbReference type="FunFam" id="1.10.230.10:FF:000002">
    <property type="entry name" value="Citrate synthase"/>
    <property type="match status" value="1"/>
</dbReference>
<dbReference type="Gene3D" id="2.20.28.60">
    <property type="match status" value="1"/>
</dbReference>
<dbReference type="Gene3D" id="1.10.580.10">
    <property type="entry name" value="Citrate Synthase, domain 1"/>
    <property type="match status" value="1"/>
</dbReference>
<dbReference type="Gene3D" id="1.10.230.10">
    <property type="entry name" value="Cytochrome P450-Terp, domain 2"/>
    <property type="match status" value="1"/>
</dbReference>
<dbReference type="InterPro" id="IPR016142">
    <property type="entry name" value="Citrate_synth-like_lrg_a-sub"/>
</dbReference>
<dbReference type="InterPro" id="IPR016143">
    <property type="entry name" value="Citrate_synth-like_sm_a-sub"/>
</dbReference>
<dbReference type="InterPro" id="IPR002020">
    <property type="entry name" value="Citrate_synthase"/>
</dbReference>
<dbReference type="InterPro" id="IPR019810">
    <property type="entry name" value="Citrate_synthase_AS"/>
</dbReference>
<dbReference type="InterPro" id="IPR024176">
    <property type="entry name" value="Citrate_synthase_bac-typ"/>
</dbReference>
<dbReference type="InterPro" id="IPR036969">
    <property type="entry name" value="Citrate_synthase_sf"/>
</dbReference>
<dbReference type="InterPro" id="IPR010953">
    <property type="entry name" value="Citrate_synthase_typ-I"/>
</dbReference>
<dbReference type="NCBIfam" id="TIGR01798">
    <property type="entry name" value="cit_synth_I"/>
    <property type="match status" value="1"/>
</dbReference>
<dbReference type="NCBIfam" id="NF004126">
    <property type="entry name" value="PRK05614.1"/>
    <property type="match status" value="1"/>
</dbReference>
<dbReference type="PANTHER" id="PTHR42871">
    <property type="entry name" value="CITRATE SYNTHASE"/>
    <property type="match status" value="1"/>
</dbReference>
<dbReference type="PANTHER" id="PTHR42871:SF1">
    <property type="entry name" value="CITRATE SYNTHASE"/>
    <property type="match status" value="1"/>
</dbReference>
<dbReference type="Pfam" id="PF00285">
    <property type="entry name" value="Citrate_synt"/>
    <property type="match status" value="1"/>
</dbReference>
<dbReference type="PIRSF" id="PIRSF001369">
    <property type="entry name" value="Citrate_synth"/>
    <property type="match status" value="1"/>
</dbReference>
<dbReference type="PRINTS" id="PR00143">
    <property type="entry name" value="CITRTSNTHASE"/>
</dbReference>
<dbReference type="SUPFAM" id="SSF48256">
    <property type="entry name" value="Citrate synthase"/>
    <property type="match status" value="1"/>
</dbReference>
<dbReference type="PROSITE" id="PS00480">
    <property type="entry name" value="CITRATE_SYNTHASE"/>
    <property type="match status" value="1"/>
</dbReference>
<protein>
    <recommendedName>
        <fullName>Citrate synthase</fullName>
        <ecNumber>2.3.3.16</ecNumber>
    </recommendedName>
</protein>
<organism>
    <name type="scientific">Bartonella henselae (strain ATCC 49882 / DSM 28221 / CCUG 30454 / Houston 1)</name>
    <name type="common">Rochalimaea henselae</name>
    <dbReference type="NCBI Taxonomy" id="283166"/>
    <lineage>
        <taxon>Bacteria</taxon>
        <taxon>Pseudomonadati</taxon>
        <taxon>Pseudomonadota</taxon>
        <taxon>Alphaproteobacteria</taxon>
        <taxon>Hyphomicrobiales</taxon>
        <taxon>Bartonellaceae</taxon>
        <taxon>Bartonella</taxon>
    </lineage>
</organism>
<reference key="1">
    <citation type="journal article" date="1995" name="J. Clin. Microbiol.">
        <title>Differentiation of Bartonella-like isolates at the species level by PCR-restriction fragment length polymorphism in the citrate synthase gene.</title>
        <authorList>
            <person name="Norman A.F."/>
            <person name="Regnery R."/>
            <person name="Jameson P."/>
            <person name="Greene C."/>
            <person name="Krause D.C."/>
        </authorList>
    </citation>
    <scope>NUCLEOTIDE SEQUENCE [GENOMIC DNA]</scope>
    <source>
        <strain>ATCC 49882 / DSM 28221 / CCUG 30454 / Houston 1</strain>
    </source>
</reference>
<reference key="2">
    <citation type="journal article" date="2004" name="Proc. Natl. Acad. Sci. U.S.A.">
        <title>The louse-borne human pathogen Bartonella quintana is a genomic derivative of the zoonotic agent Bartonella henselae.</title>
        <authorList>
            <person name="Alsmark U.C.M."/>
            <person name="Frank A.C."/>
            <person name="Karlberg E.O."/>
            <person name="Legault B.-A."/>
            <person name="Ardell D.H."/>
            <person name="Canbaeck B."/>
            <person name="Eriksson A.-S."/>
            <person name="Naeslund A.K."/>
            <person name="Handley S.A."/>
            <person name="Huvet M."/>
            <person name="La Scola B."/>
            <person name="Holmberg M."/>
            <person name="Andersson S.G.E."/>
        </authorList>
    </citation>
    <scope>NUCLEOTIDE SEQUENCE [LARGE SCALE GENOMIC DNA]</scope>
    <source>
        <strain>ATCC 49882 / DSM 28221 / CCUG 30454 / Houston 1</strain>
    </source>
</reference>
<accession>P51033</accession>
<comment type="catalytic activity">
    <reaction evidence="1">
        <text>oxaloacetate + acetyl-CoA + H2O = citrate + CoA + H(+)</text>
        <dbReference type="Rhea" id="RHEA:16845"/>
        <dbReference type="ChEBI" id="CHEBI:15377"/>
        <dbReference type="ChEBI" id="CHEBI:15378"/>
        <dbReference type="ChEBI" id="CHEBI:16452"/>
        <dbReference type="ChEBI" id="CHEBI:16947"/>
        <dbReference type="ChEBI" id="CHEBI:57287"/>
        <dbReference type="ChEBI" id="CHEBI:57288"/>
        <dbReference type="EC" id="2.3.3.16"/>
    </reaction>
</comment>
<comment type="pathway">
    <text>Carbohydrate metabolism; tricarboxylic acid cycle; isocitrate from oxaloacetate: step 1/2.</text>
</comment>
<comment type="miscellaneous">
    <text>Citrate synthase is found in nearly all cells capable of oxidative metabolism.</text>
</comment>
<comment type="similarity">
    <text evidence="2">Belongs to the citrate synthase family.</text>
</comment>